<feature type="chain" id="PRO_1000204367" description="Nicotinate-nucleotide--dimethylbenzimidazole phosphoribosyltransferase">
    <location>
        <begin position="1"/>
        <end position="349"/>
    </location>
</feature>
<feature type="active site" description="Proton acceptor" evidence="1">
    <location>
        <position position="318"/>
    </location>
</feature>
<accession>C6E7Q4</accession>
<evidence type="ECO:0000255" key="1">
    <source>
        <dbReference type="HAMAP-Rule" id="MF_00230"/>
    </source>
</evidence>
<proteinExistence type="inferred from homology"/>
<reference key="1">
    <citation type="submission" date="2009-07" db="EMBL/GenBank/DDBJ databases">
        <title>Complete sequence of Geobacter sp. M21.</title>
        <authorList>
            <consortium name="US DOE Joint Genome Institute"/>
            <person name="Lucas S."/>
            <person name="Copeland A."/>
            <person name="Lapidus A."/>
            <person name="Glavina del Rio T."/>
            <person name="Dalin E."/>
            <person name="Tice H."/>
            <person name="Bruce D."/>
            <person name="Goodwin L."/>
            <person name="Pitluck S."/>
            <person name="Saunders E."/>
            <person name="Brettin T."/>
            <person name="Detter J.C."/>
            <person name="Han C."/>
            <person name="Larimer F."/>
            <person name="Land M."/>
            <person name="Hauser L."/>
            <person name="Kyrpides N."/>
            <person name="Ovchinnikova G."/>
            <person name="Lovley D."/>
        </authorList>
    </citation>
    <scope>NUCLEOTIDE SEQUENCE [LARGE SCALE GENOMIC DNA]</scope>
    <source>
        <strain>M21</strain>
    </source>
</reference>
<name>COBT_GEOSM</name>
<protein>
    <recommendedName>
        <fullName evidence="1">Nicotinate-nucleotide--dimethylbenzimidazole phosphoribosyltransferase</fullName>
        <shortName evidence="1">NN:DBI PRT</shortName>
        <ecNumber evidence="1">2.4.2.21</ecNumber>
    </recommendedName>
    <alternativeName>
        <fullName evidence="1">N(1)-alpha-phosphoribosyltransferase</fullName>
    </alternativeName>
</protein>
<comment type="function">
    <text evidence="1">Catalyzes the synthesis of alpha-ribazole-5'-phosphate from nicotinate mononucleotide (NAMN) and 5,6-dimethylbenzimidazole (DMB).</text>
</comment>
<comment type="catalytic activity">
    <reaction evidence="1">
        <text>5,6-dimethylbenzimidazole + nicotinate beta-D-ribonucleotide = alpha-ribazole 5'-phosphate + nicotinate + H(+)</text>
        <dbReference type="Rhea" id="RHEA:11196"/>
        <dbReference type="ChEBI" id="CHEBI:15378"/>
        <dbReference type="ChEBI" id="CHEBI:15890"/>
        <dbReference type="ChEBI" id="CHEBI:32544"/>
        <dbReference type="ChEBI" id="CHEBI:57502"/>
        <dbReference type="ChEBI" id="CHEBI:57918"/>
        <dbReference type="EC" id="2.4.2.21"/>
    </reaction>
</comment>
<comment type="pathway">
    <text evidence="1">Nucleoside biosynthesis; alpha-ribazole biosynthesis; alpha-ribazole from 5,6-dimethylbenzimidazole: step 1/2.</text>
</comment>
<comment type="similarity">
    <text evidence="1">Belongs to the CobT family.</text>
</comment>
<organism>
    <name type="scientific">Geobacter sp. (strain M21)</name>
    <dbReference type="NCBI Taxonomy" id="443144"/>
    <lineage>
        <taxon>Bacteria</taxon>
        <taxon>Pseudomonadati</taxon>
        <taxon>Thermodesulfobacteriota</taxon>
        <taxon>Desulfuromonadia</taxon>
        <taxon>Geobacterales</taxon>
        <taxon>Geobacteraceae</taxon>
        <taxon>Geobacter</taxon>
    </lineage>
</organism>
<keyword id="KW-0169">Cobalamin biosynthesis</keyword>
<keyword id="KW-0328">Glycosyltransferase</keyword>
<keyword id="KW-0808">Transferase</keyword>
<gene>
    <name evidence="1" type="primary">cobT</name>
    <name type="ordered locus">GM21_3897</name>
</gene>
<sequence>MELLESALAKIQPVDEALLAQAQAKLDNKTKPPGSLGLLEEMARRFAAITGDLSPKMGKKVVFTFAGDHGIVEEGVSLYPKEVTPQMVLNFLRGGAGVNVLARHAGAEVRVVDVGVDYDFEPTEGLIIRKIAKGTRNFAKESAMTREEAVAAIEVGIALADRAKAEGISMVGTGEMGIGNTSPSSAIIAAFAGCSVREVTHRGTGIGDQALEHKIKVIQAGLDLNRPNPEDPLDVLAKVGGLEIAGIAGLVLGAAANRIPVVVDGFISTAGALIACELHPNVREYIFAAHNSVEIGHQMMLQRIGAKPILDLQLRLGEGTGAALAMGLIEASVKVLNEMATFEEAGVTS</sequence>
<dbReference type="EC" id="2.4.2.21" evidence="1"/>
<dbReference type="EMBL" id="CP001661">
    <property type="protein sequence ID" value="ACT19914.1"/>
    <property type="molecule type" value="Genomic_DNA"/>
</dbReference>
<dbReference type="SMR" id="C6E7Q4"/>
<dbReference type="STRING" id="443144.GM21_3897"/>
<dbReference type="KEGG" id="gem:GM21_3897"/>
<dbReference type="eggNOG" id="COG2038">
    <property type="taxonomic scope" value="Bacteria"/>
</dbReference>
<dbReference type="HOGENOM" id="CLU_002982_0_0_7"/>
<dbReference type="OrthoDB" id="9781491at2"/>
<dbReference type="UniPathway" id="UPA00061">
    <property type="reaction ID" value="UER00516"/>
</dbReference>
<dbReference type="GO" id="GO:0008939">
    <property type="term" value="F:nicotinate-nucleotide-dimethylbenzimidazole phosphoribosyltransferase activity"/>
    <property type="evidence" value="ECO:0007669"/>
    <property type="project" value="UniProtKB-UniRule"/>
</dbReference>
<dbReference type="GO" id="GO:0009236">
    <property type="term" value="P:cobalamin biosynthetic process"/>
    <property type="evidence" value="ECO:0007669"/>
    <property type="project" value="UniProtKB-KW"/>
</dbReference>
<dbReference type="CDD" id="cd02439">
    <property type="entry name" value="DMB-PRT_CobT"/>
    <property type="match status" value="1"/>
</dbReference>
<dbReference type="FunFam" id="3.40.50.10210:FF:000001">
    <property type="entry name" value="Nicotinate-nucleotide--dimethylbenzimidazole phosphoribosyltransferase"/>
    <property type="match status" value="1"/>
</dbReference>
<dbReference type="Gene3D" id="1.10.1610.10">
    <property type="match status" value="1"/>
</dbReference>
<dbReference type="Gene3D" id="3.40.50.10210">
    <property type="match status" value="1"/>
</dbReference>
<dbReference type="HAMAP" id="MF_00230">
    <property type="entry name" value="CobT"/>
    <property type="match status" value="1"/>
</dbReference>
<dbReference type="InterPro" id="IPR003200">
    <property type="entry name" value="Nict_dMeBzImd_PRibTrfase"/>
</dbReference>
<dbReference type="InterPro" id="IPR017846">
    <property type="entry name" value="Nict_dMeBzImd_PRibTrfase_bact"/>
</dbReference>
<dbReference type="InterPro" id="IPR023195">
    <property type="entry name" value="Nict_dMeBzImd_PRibTrfase_N"/>
</dbReference>
<dbReference type="InterPro" id="IPR036087">
    <property type="entry name" value="Nict_dMeBzImd_PRibTrfase_sf"/>
</dbReference>
<dbReference type="NCBIfam" id="TIGR03160">
    <property type="entry name" value="cobT_DBIPRT"/>
    <property type="match status" value="1"/>
</dbReference>
<dbReference type="NCBIfam" id="NF000996">
    <property type="entry name" value="PRK00105.1"/>
    <property type="match status" value="1"/>
</dbReference>
<dbReference type="PANTHER" id="PTHR43463">
    <property type="entry name" value="NICOTINATE-NUCLEOTIDE--DIMETHYLBENZIMIDAZOLE PHOSPHORIBOSYLTRANSFERASE"/>
    <property type="match status" value="1"/>
</dbReference>
<dbReference type="PANTHER" id="PTHR43463:SF1">
    <property type="entry name" value="NICOTINATE-NUCLEOTIDE--DIMETHYLBENZIMIDAZOLE PHOSPHORIBOSYLTRANSFERASE"/>
    <property type="match status" value="1"/>
</dbReference>
<dbReference type="Pfam" id="PF02277">
    <property type="entry name" value="DBI_PRT"/>
    <property type="match status" value="1"/>
</dbReference>
<dbReference type="SUPFAM" id="SSF52733">
    <property type="entry name" value="Nicotinate mononucleotide:5,6-dimethylbenzimidazole phosphoribosyltransferase (CobT)"/>
    <property type="match status" value="1"/>
</dbReference>